<organism>
    <name type="scientific">Escherichia coli (strain ATCC 8739 / DSM 1576 / NBRC 3972 / NCIMB 8545 / WDCM 00012 / Crooks)</name>
    <dbReference type="NCBI Taxonomy" id="481805"/>
    <lineage>
        <taxon>Bacteria</taxon>
        <taxon>Pseudomonadati</taxon>
        <taxon>Pseudomonadota</taxon>
        <taxon>Gammaproteobacteria</taxon>
        <taxon>Enterobacterales</taxon>
        <taxon>Enterobacteriaceae</taxon>
        <taxon>Escherichia</taxon>
    </lineage>
</organism>
<proteinExistence type="inferred from homology"/>
<name>MINC_ECOLC</name>
<comment type="function">
    <text evidence="1">Cell division inhibitor that blocks the formation of polar Z ring septums. Rapidly oscillates between the poles of the cell to destabilize FtsZ filaments that have formed before they mature into polar Z rings. Prevents FtsZ polymerization.</text>
</comment>
<comment type="subunit">
    <text evidence="1">Interacts with MinD and FtsZ.</text>
</comment>
<comment type="similarity">
    <text evidence="1">Belongs to the MinC family.</text>
</comment>
<protein>
    <recommendedName>
        <fullName evidence="1">Probable septum site-determining protein MinC</fullName>
    </recommendedName>
</protein>
<accession>B1IUB5</accession>
<evidence type="ECO:0000255" key="1">
    <source>
        <dbReference type="HAMAP-Rule" id="MF_00267"/>
    </source>
</evidence>
<evidence type="ECO:0000256" key="2">
    <source>
        <dbReference type="SAM" id="MobiDB-lite"/>
    </source>
</evidence>
<keyword id="KW-0131">Cell cycle</keyword>
<keyword id="KW-0132">Cell division</keyword>
<keyword id="KW-0717">Septation</keyword>
<feature type="chain" id="PRO_1000078653" description="Probable septum site-determining protein MinC">
    <location>
        <begin position="1"/>
        <end position="231"/>
    </location>
</feature>
<feature type="region of interest" description="Disordered" evidence="2">
    <location>
        <begin position="101"/>
        <end position="125"/>
    </location>
</feature>
<feature type="compositionally biased region" description="Low complexity" evidence="2">
    <location>
        <begin position="114"/>
        <end position="123"/>
    </location>
</feature>
<dbReference type="EMBL" id="CP000946">
    <property type="protein sequence ID" value="ACA78082.1"/>
    <property type="molecule type" value="Genomic_DNA"/>
</dbReference>
<dbReference type="RefSeq" id="WP_001301105.1">
    <property type="nucleotide sequence ID" value="NZ_MTFT01000016.1"/>
</dbReference>
<dbReference type="SMR" id="B1IUB5"/>
<dbReference type="KEGG" id="ecl:EcolC_2449"/>
<dbReference type="HOGENOM" id="CLU_067812_0_1_6"/>
<dbReference type="GO" id="GO:0000902">
    <property type="term" value="P:cell morphogenesis"/>
    <property type="evidence" value="ECO:0007669"/>
    <property type="project" value="InterPro"/>
</dbReference>
<dbReference type="GO" id="GO:0000917">
    <property type="term" value="P:division septum assembly"/>
    <property type="evidence" value="ECO:0007669"/>
    <property type="project" value="UniProtKB-KW"/>
</dbReference>
<dbReference type="GO" id="GO:0051302">
    <property type="term" value="P:regulation of cell division"/>
    <property type="evidence" value="ECO:0007669"/>
    <property type="project" value="InterPro"/>
</dbReference>
<dbReference type="GO" id="GO:1901891">
    <property type="term" value="P:regulation of cell septum assembly"/>
    <property type="evidence" value="ECO:0007669"/>
    <property type="project" value="InterPro"/>
</dbReference>
<dbReference type="FunFam" id="2.160.20.70:FF:000002">
    <property type="entry name" value="Probable septum site-determining protein MinC"/>
    <property type="match status" value="1"/>
</dbReference>
<dbReference type="Gene3D" id="2.160.20.70">
    <property type="match status" value="1"/>
</dbReference>
<dbReference type="Gene3D" id="3.30.70.260">
    <property type="match status" value="1"/>
</dbReference>
<dbReference type="HAMAP" id="MF_00267">
    <property type="entry name" value="MinC"/>
    <property type="match status" value="1"/>
</dbReference>
<dbReference type="InterPro" id="IPR016098">
    <property type="entry name" value="CAP/MinC_C"/>
</dbReference>
<dbReference type="InterPro" id="IPR013033">
    <property type="entry name" value="MinC"/>
</dbReference>
<dbReference type="InterPro" id="IPR036145">
    <property type="entry name" value="MinC_C_sf"/>
</dbReference>
<dbReference type="InterPro" id="IPR007874">
    <property type="entry name" value="MinC_N"/>
</dbReference>
<dbReference type="InterPro" id="IPR005526">
    <property type="entry name" value="Septum_form_inhib_MinC_C"/>
</dbReference>
<dbReference type="NCBIfam" id="TIGR01222">
    <property type="entry name" value="minC"/>
    <property type="match status" value="1"/>
</dbReference>
<dbReference type="PANTHER" id="PTHR34108">
    <property type="entry name" value="SEPTUM SITE-DETERMINING PROTEIN MINC"/>
    <property type="match status" value="1"/>
</dbReference>
<dbReference type="PANTHER" id="PTHR34108:SF1">
    <property type="entry name" value="SEPTUM SITE-DETERMINING PROTEIN MINC"/>
    <property type="match status" value="1"/>
</dbReference>
<dbReference type="Pfam" id="PF03775">
    <property type="entry name" value="MinC_C"/>
    <property type="match status" value="1"/>
</dbReference>
<dbReference type="Pfam" id="PF05209">
    <property type="entry name" value="MinC_N"/>
    <property type="match status" value="1"/>
</dbReference>
<dbReference type="SUPFAM" id="SSF63848">
    <property type="entry name" value="Cell-division inhibitor MinC, C-terminal domain"/>
    <property type="match status" value="1"/>
</dbReference>
<gene>
    <name evidence="1" type="primary">minC</name>
    <name type="ordered locus">EcolC_2449</name>
</gene>
<reference key="1">
    <citation type="submission" date="2008-02" db="EMBL/GenBank/DDBJ databases">
        <title>Complete sequence of Escherichia coli C str. ATCC 8739.</title>
        <authorList>
            <person name="Copeland A."/>
            <person name="Lucas S."/>
            <person name="Lapidus A."/>
            <person name="Glavina del Rio T."/>
            <person name="Dalin E."/>
            <person name="Tice H."/>
            <person name="Bruce D."/>
            <person name="Goodwin L."/>
            <person name="Pitluck S."/>
            <person name="Kiss H."/>
            <person name="Brettin T."/>
            <person name="Detter J.C."/>
            <person name="Han C."/>
            <person name="Kuske C.R."/>
            <person name="Schmutz J."/>
            <person name="Larimer F."/>
            <person name="Land M."/>
            <person name="Hauser L."/>
            <person name="Kyrpides N."/>
            <person name="Mikhailova N."/>
            <person name="Ingram L."/>
            <person name="Richardson P."/>
        </authorList>
    </citation>
    <scope>NUCLEOTIDE SEQUENCE [LARGE SCALE GENOMIC DNA]</scope>
    <source>
        <strain>ATCC 8739 / DSM 1576 / NBRC 3972 / NCIMB 8545 / WDCM 00012 / Crooks</strain>
    </source>
</reference>
<sequence length="231" mass="24776">MSNTPIELKGSSFTLSVVHLHEAEPKVIHQALEDKIAQAPAFLKHAPVVLNVSALEDPVNWSAMHKAVSATGLRVIGVSGCKDAQLKAEIEKMGLPILTEGKEKAPRPAPTPQAPAQNTTPVTKTRLIDTPVRSGQRIYAPQCDLIVTSHVSAGAELIADGNIHVYGMMRGRALAGASGDRETQIFCTNLMAELVSIAGEYWLSDQIPAEFYGKAARLQLVENALTVQPLN</sequence>